<proteinExistence type="inferred from homology"/>
<accession>A4W341</accession>
<reference key="1">
    <citation type="journal article" date="2007" name="PLoS ONE">
        <title>A glimpse of streptococcal toxic shock syndrome from comparative genomics of S. suis 2 Chinese isolates.</title>
        <authorList>
            <person name="Chen C."/>
            <person name="Tang J."/>
            <person name="Dong W."/>
            <person name="Wang C."/>
            <person name="Feng Y."/>
            <person name="Wang J."/>
            <person name="Zheng F."/>
            <person name="Pan X."/>
            <person name="Liu D."/>
            <person name="Li M."/>
            <person name="Song Y."/>
            <person name="Zhu X."/>
            <person name="Sun H."/>
            <person name="Feng T."/>
            <person name="Guo Z."/>
            <person name="Ju A."/>
            <person name="Ge J."/>
            <person name="Dong Y."/>
            <person name="Sun W."/>
            <person name="Jiang Y."/>
            <person name="Wang J."/>
            <person name="Yan J."/>
            <person name="Yang H."/>
            <person name="Wang X."/>
            <person name="Gao G.F."/>
            <person name="Yang R."/>
            <person name="Wang J."/>
            <person name="Yu J."/>
        </authorList>
    </citation>
    <scope>NUCLEOTIDE SEQUENCE [LARGE SCALE GENOMIC DNA]</scope>
    <source>
        <strain>98HAH33</strain>
    </source>
</reference>
<protein>
    <recommendedName>
        <fullName evidence="1">Protein SprT-like</fullName>
    </recommendedName>
</protein>
<evidence type="ECO:0000255" key="1">
    <source>
        <dbReference type="HAMAP-Rule" id="MF_00745"/>
    </source>
</evidence>
<organism>
    <name type="scientific">Streptococcus suis (strain 98HAH33)</name>
    <dbReference type="NCBI Taxonomy" id="391296"/>
    <lineage>
        <taxon>Bacteria</taxon>
        <taxon>Bacillati</taxon>
        <taxon>Bacillota</taxon>
        <taxon>Bacilli</taxon>
        <taxon>Lactobacillales</taxon>
        <taxon>Streptococcaceae</taxon>
        <taxon>Streptococcus</taxon>
    </lineage>
</organism>
<name>SPRTL_STRS2</name>
<feature type="chain" id="PRO_1000046519" description="Protein SprT-like">
    <location>
        <begin position="1"/>
        <end position="144"/>
    </location>
</feature>
<feature type="domain" description="SprT-like" evidence="1">
    <location>
        <begin position="4"/>
        <end position="143"/>
    </location>
</feature>
<feature type="active site" evidence="1">
    <location>
        <position position="65"/>
    </location>
</feature>
<feature type="binding site" evidence="1">
    <location>
        <position position="64"/>
    </location>
    <ligand>
        <name>Zn(2+)</name>
        <dbReference type="ChEBI" id="CHEBI:29105"/>
    </ligand>
</feature>
<feature type="binding site" evidence="1">
    <location>
        <position position="68"/>
    </location>
    <ligand>
        <name>Zn(2+)</name>
        <dbReference type="ChEBI" id="CHEBI:29105"/>
    </ligand>
</feature>
<gene>
    <name type="ordered locus">SSU98_1622</name>
</gene>
<comment type="cofactor">
    <cofactor evidence="1">
        <name>Zn(2+)</name>
        <dbReference type="ChEBI" id="CHEBI:29105"/>
    </cofactor>
    <text evidence="1">Binds 1 zinc ion.</text>
</comment>
<comment type="subcellular location">
    <subcellularLocation>
        <location evidence="1">Cytoplasm</location>
    </subcellularLocation>
</comment>
<comment type="similarity">
    <text evidence="1">Belongs to the SprT family.</text>
</comment>
<dbReference type="EMBL" id="CP000408">
    <property type="protein sequence ID" value="ABP92780.1"/>
    <property type="molecule type" value="Genomic_DNA"/>
</dbReference>
<dbReference type="KEGG" id="ssv:SSU98_1622"/>
<dbReference type="HOGENOM" id="CLU_123820_0_0_9"/>
<dbReference type="BioCyc" id="SSUI391296:GI2E-1678-MONOMER"/>
<dbReference type="GO" id="GO:0005737">
    <property type="term" value="C:cytoplasm"/>
    <property type="evidence" value="ECO:0007669"/>
    <property type="project" value="UniProtKB-SubCell"/>
</dbReference>
<dbReference type="GO" id="GO:0008270">
    <property type="term" value="F:zinc ion binding"/>
    <property type="evidence" value="ECO:0007669"/>
    <property type="project" value="UniProtKB-UniRule"/>
</dbReference>
<dbReference type="GO" id="GO:0006950">
    <property type="term" value="P:response to stress"/>
    <property type="evidence" value="ECO:0007669"/>
    <property type="project" value="UniProtKB-ARBA"/>
</dbReference>
<dbReference type="HAMAP" id="MF_00745">
    <property type="entry name" value="SprT_like"/>
    <property type="match status" value="1"/>
</dbReference>
<dbReference type="InterPro" id="IPR006640">
    <property type="entry name" value="SprT-like_domain"/>
</dbReference>
<dbReference type="InterPro" id="IPR035240">
    <property type="entry name" value="SprT_Zn_ribbon"/>
</dbReference>
<dbReference type="InterPro" id="IPR023524">
    <property type="entry name" value="Uncharacterised_SprT-like"/>
</dbReference>
<dbReference type="NCBIfam" id="NF003339">
    <property type="entry name" value="PRK04351.1"/>
    <property type="match status" value="1"/>
</dbReference>
<dbReference type="Pfam" id="PF10263">
    <property type="entry name" value="SprT-like"/>
    <property type="match status" value="1"/>
</dbReference>
<dbReference type="Pfam" id="PF17283">
    <property type="entry name" value="Zn_ribbon_SprT"/>
    <property type="match status" value="1"/>
</dbReference>
<dbReference type="SMART" id="SM00731">
    <property type="entry name" value="SprT"/>
    <property type="match status" value="1"/>
</dbReference>
<sequence length="144" mass="17250">MDLNKYVQEVSLQDFGKEFRHVAIWNRRLRSTGGRFFPRDGHLDFNPKHLEEQGLEVFRKIVRHELCHYHLYFEKKGYRHGDRDFKELLAAVDGLRYAPQLEQATKPSLIYCCQSCGQVYQRKRRIDLKKYRCGKCRGKLTLKE</sequence>
<keyword id="KW-0963">Cytoplasm</keyword>
<keyword id="KW-0479">Metal-binding</keyword>
<keyword id="KW-0862">Zinc</keyword>